<keyword id="KW-0028">Amino-acid biosynthesis</keyword>
<keyword id="KW-0057">Aromatic amino acid biosynthesis</keyword>
<keyword id="KW-0067">ATP-binding</keyword>
<keyword id="KW-0963">Cytoplasm</keyword>
<keyword id="KW-0418">Kinase</keyword>
<keyword id="KW-0460">Magnesium</keyword>
<keyword id="KW-0479">Metal-binding</keyword>
<keyword id="KW-0547">Nucleotide-binding</keyword>
<keyword id="KW-0808">Transferase</keyword>
<comment type="function">
    <text evidence="1">Catalyzes the specific phosphorylation of the 3-hydroxyl group of shikimic acid using ATP as a cosubstrate.</text>
</comment>
<comment type="catalytic activity">
    <reaction evidence="1">
        <text>shikimate + ATP = 3-phosphoshikimate + ADP + H(+)</text>
        <dbReference type="Rhea" id="RHEA:13121"/>
        <dbReference type="ChEBI" id="CHEBI:15378"/>
        <dbReference type="ChEBI" id="CHEBI:30616"/>
        <dbReference type="ChEBI" id="CHEBI:36208"/>
        <dbReference type="ChEBI" id="CHEBI:145989"/>
        <dbReference type="ChEBI" id="CHEBI:456216"/>
        <dbReference type="EC" id="2.7.1.71"/>
    </reaction>
</comment>
<comment type="cofactor">
    <cofactor evidence="1">
        <name>Mg(2+)</name>
        <dbReference type="ChEBI" id="CHEBI:18420"/>
    </cofactor>
    <text evidence="1">Binds 1 Mg(2+) ion per subunit.</text>
</comment>
<comment type="pathway">
    <text evidence="1">Metabolic intermediate biosynthesis; chorismate biosynthesis; chorismate from D-erythrose 4-phosphate and phosphoenolpyruvate: step 5/7.</text>
</comment>
<comment type="subunit">
    <text evidence="1">Monomer.</text>
</comment>
<comment type="subcellular location">
    <subcellularLocation>
        <location evidence="1">Cytoplasm</location>
    </subcellularLocation>
</comment>
<comment type="similarity">
    <text evidence="1">Belongs to the shikimate kinase family.</text>
</comment>
<reference key="1">
    <citation type="submission" date="2007-03" db="EMBL/GenBank/DDBJ databases">
        <authorList>
            <person name="Heidelberg J."/>
        </authorList>
    </citation>
    <scope>NUCLEOTIDE SEQUENCE [LARGE SCALE GENOMIC DNA]</scope>
    <source>
        <strain>ATCC 39541 / Classical Ogawa 395 / O395</strain>
    </source>
</reference>
<reference key="2">
    <citation type="journal article" date="2008" name="PLoS ONE">
        <title>A recalibrated molecular clock and independent origins for the cholera pandemic clones.</title>
        <authorList>
            <person name="Feng L."/>
            <person name="Reeves P.R."/>
            <person name="Lan R."/>
            <person name="Ren Y."/>
            <person name="Gao C."/>
            <person name="Zhou Z."/>
            <person name="Ren Y."/>
            <person name="Cheng J."/>
            <person name="Wang W."/>
            <person name="Wang J."/>
            <person name="Qian W."/>
            <person name="Li D."/>
            <person name="Wang L."/>
        </authorList>
    </citation>
    <scope>NUCLEOTIDE SEQUENCE [LARGE SCALE GENOMIC DNA]</scope>
    <source>
        <strain>ATCC 39541 / Classical Ogawa 395 / O395</strain>
    </source>
</reference>
<proteinExistence type="inferred from homology"/>
<sequence>MAEKRNIFLVGPMGAGKSTIGRHLAQQLHMEFIDSDTVIEERTGADIAWVFDVEGEEGFRKREEAVINDLTEQQGIVLATGGGSVISKENRNRLSARGIVVYLETTIEKQLARTNRDKKRPLLQTDCPREVLEQLAEDRNPLYEEIADITVRTDDQSAKVVANQIVKMLEEHIM</sequence>
<feature type="chain" id="PRO_1000071326" description="Shikimate kinase">
    <location>
        <begin position="1"/>
        <end position="174"/>
    </location>
</feature>
<feature type="binding site" evidence="1">
    <location>
        <begin position="14"/>
        <end position="19"/>
    </location>
    <ligand>
        <name>ATP</name>
        <dbReference type="ChEBI" id="CHEBI:30616"/>
    </ligand>
</feature>
<feature type="binding site" evidence="1">
    <location>
        <position position="18"/>
    </location>
    <ligand>
        <name>Mg(2+)</name>
        <dbReference type="ChEBI" id="CHEBI:18420"/>
    </ligand>
</feature>
<feature type="binding site" evidence="1">
    <location>
        <position position="36"/>
    </location>
    <ligand>
        <name>substrate</name>
    </ligand>
</feature>
<feature type="binding site" evidence="1">
    <location>
        <position position="60"/>
    </location>
    <ligand>
        <name>substrate</name>
    </ligand>
</feature>
<feature type="binding site" evidence="1">
    <location>
        <position position="82"/>
    </location>
    <ligand>
        <name>substrate</name>
    </ligand>
</feature>
<feature type="binding site" evidence="1">
    <location>
        <position position="120"/>
    </location>
    <ligand>
        <name>ATP</name>
        <dbReference type="ChEBI" id="CHEBI:30616"/>
    </ligand>
</feature>
<feature type="binding site" evidence="1">
    <location>
        <position position="139"/>
    </location>
    <ligand>
        <name>substrate</name>
    </ligand>
</feature>
<feature type="binding site" evidence="1">
    <location>
        <position position="156"/>
    </location>
    <ligand>
        <name>ATP</name>
        <dbReference type="ChEBI" id="CHEBI:30616"/>
    </ligand>
</feature>
<name>AROK_VIBC3</name>
<dbReference type="EC" id="2.7.1.71" evidence="1"/>
<dbReference type="EMBL" id="CP000627">
    <property type="protein sequence ID" value="ABQ21486.1"/>
    <property type="molecule type" value="Genomic_DNA"/>
</dbReference>
<dbReference type="EMBL" id="CP001235">
    <property type="protein sequence ID" value="ACP10727.1"/>
    <property type="molecule type" value="Genomic_DNA"/>
</dbReference>
<dbReference type="RefSeq" id="WP_000818616.1">
    <property type="nucleotide sequence ID" value="NZ_JAACZH010000007.1"/>
</dbReference>
<dbReference type="SMR" id="A5F523"/>
<dbReference type="GeneID" id="88785188"/>
<dbReference type="KEGG" id="vco:VC0395_A2206"/>
<dbReference type="KEGG" id="vcr:VC395_2742"/>
<dbReference type="PATRIC" id="fig|345073.21.peg.2642"/>
<dbReference type="eggNOG" id="COG0703">
    <property type="taxonomic scope" value="Bacteria"/>
</dbReference>
<dbReference type="HOGENOM" id="CLU_057607_2_2_6"/>
<dbReference type="OrthoDB" id="9800332at2"/>
<dbReference type="UniPathway" id="UPA00053">
    <property type="reaction ID" value="UER00088"/>
</dbReference>
<dbReference type="Proteomes" id="UP000000249">
    <property type="component" value="Chromosome 2"/>
</dbReference>
<dbReference type="GO" id="GO:0005829">
    <property type="term" value="C:cytosol"/>
    <property type="evidence" value="ECO:0007669"/>
    <property type="project" value="TreeGrafter"/>
</dbReference>
<dbReference type="GO" id="GO:0005524">
    <property type="term" value="F:ATP binding"/>
    <property type="evidence" value="ECO:0007669"/>
    <property type="project" value="UniProtKB-UniRule"/>
</dbReference>
<dbReference type="GO" id="GO:0000287">
    <property type="term" value="F:magnesium ion binding"/>
    <property type="evidence" value="ECO:0007669"/>
    <property type="project" value="UniProtKB-UniRule"/>
</dbReference>
<dbReference type="GO" id="GO:0004765">
    <property type="term" value="F:shikimate kinase activity"/>
    <property type="evidence" value="ECO:0007669"/>
    <property type="project" value="UniProtKB-UniRule"/>
</dbReference>
<dbReference type="GO" id="GO:0008652">
    <property type="term" value="P:amino acid biosynthetic process"/>
    <property type="evidence" value="ECO:0007669"/>
    <property type="project" value="UniProtKB-KW"/>
</dbReference>
<dbReference type="GO" id="GO:0009073">
    <property type="term" value="P:aromatic amino acid family biosynthetic process"/>
    <property type="evidence" value="ECO:0007669"/>
    <property type="project" value="UniProtKB-KW"/>
</dbReference>
<dbReference type="GO" id="GO:0009423">
    <property type="term" value="P:chorismate biosynthetic process"/>
    <property type="evidence" value="ECO:0007669"/>
    <property type="project" value="UniProtKB-UniRule"/>
</dbReference>
<dbReference type="CDD" id="cd00464">
    <property type="entry name" value="SK"/>
    <property type="match status" value="1"/>
</dbReference>
<dbReference type="FunFam" id="3.40.50.300:FF:000099">
    <property type="entry name" value="Shikimate kinase 1"/>
    <property type="match status" value="1"/>
</dbReference>
<dbReference type="Gene3D" id="3.40.50.300">
    <property type="entry name" value="P-loop containing nucleotide triphosphate hydrolases"/>
    <property type="match status" value="1"/>
</dbReference>
<dbReference type="HAMAP" id="MF_00109">
    <property type="entry name" value="Shikimate_kinase"/>
    <property type="match status" value="1"/>
</dbReference>
<dbReference type="InterPro" id="IPR027417">
    <property type="entry name" value="P-loop_NTPase"/>
</dbReference>
<dbReference type="InterPro" id="IPR031322">
    <property type="entry name" value="Shikimate/glucono_kinase"/>
</dbReference>
<dbReference type="InterPro" id="IPR000623">
    <property type="entry name" value="Shikimate_kinase/TSH1"/>
</dbReference>
<dbReference type="InterPro" id="IPR023000">
    <property type="entry name" value="Shikimate_kinase_CS"/>
</dbReference>
<dbReference type="NCBIfam" id="NF003456">
    <property type="entry name" value="PRK05057.1"/>
    <property type="match status" value="1"/>
</dbReference>
<dbReference type="PANTHER" id="PTHR21087">
    <property type="entry name" value="SHIKIMATE KINASE"/>
    <property type="match status" value="1"/>
</dbReference>
<dbReference type="PANTHER" id="PTHR21087:SF16">
    <property type="entry name" value="SHIKIMATE KINASE 1, CHLOROPLASTIC"/>
    <property type="match status" value="1"/>
</dbReference>
<dbReference type="Pfam" id="PF01202">
    <property type="entry name" value="SKI"/>
    <property type="match status" value="1"/>
</dbReference>
<dbReference type="PRINTS" id="PR01100">
    <property type="entry name" value="SHIKIMTKNASE"/>
</dbReference>
<dbReference type="SUPFAM" id="SSF52540">
    <property type="entry name" value="P-loop containing nucleoside triphosphate hydrolases"/>
    <property type="match status" value="1"/>
</dbReference>
<dbReference type="PROSITE" id="PS01128">
    <property type="entry name" value="SHIKIMATE_KINASE"/>
    <property type="match status" value="1"/>
</dbReference>
<evidence type="ECO:0000255" key="1">
    <source>
        <dbReference type="HAMAP-Rule" id="MF_00109"/>
    </source>
</evidence>
<protein>
    <recommendedName>
        <fullName evidence="1">Shikimate kinase</fullName>
        <shortName evidence="1">SK</shortName>
        <ecNumber evidence="1">2.7.1.71</ecNumber>
    </recommendedName>
</protein>
<accession>A5F523</accession>
<accession>C3LXM7</accession>
<organism>
    <name type="scientific">Vibrio cholerae serotype O1 (strain ATCC 39541 / Classical Ogawa 395 / O395)</name>
    <dbReference type="NCBI Taxonomy" id="345073"/>
    <lineage>
        <taxon>Bacteria</taxon>
        <taxon>Pseudomonadati</taxon>
        <taxon>Pseudomonadota</taxon>
        <taxon>Gammaproteobacteria</taxon>
        <taxon>Vibrionales</taxon>
        <taxon>Vibrionaceae</taxon>
        <taxon>Vibrio</taxon>
    </lineage>
</organism>
<gene>
    <name evidence="1" type="primary">aroK</name>
    <name type="ordered locus">VC0395_A2206</name>
    <name type="ordered locus">VC395_2742</name>
</gene>